<feature type="signal peptide" evidence="1">
    <location>
        <begin position="1"/>
        <end position="22"/>
    </location>
</feature>
<feature type="chain" id="PRO_5000316570" description="Outer-membrane lipoprotein carrier protein">
    <location>
        <begin position="23"/>
        <end position="208"/>
    </location>
</feature>
<organism>
    <name type="scientific">Shewanella woodyi (strain ATCC 51908 / MS32)</name>
    <dbReference type="NCBI Taxonomy" id="392500"/>
    <lineage>
        <taxon>Bacteria</taxon>
        <taxon>Pseudomonadati</taxon>
        <taxon>Pseudomonadota</taxon>
        <taxon>Gammaproteobacteria</taxon>
        <taxon>Alteromonadales</taxon>
        <taxon>Shewanellaceae</taxon>
        <taxon>Shewanella</taxon>
    </lineage>
</organism>
<dbReference type="EMBL" id="CP000961">
    <property type="protein sequence ID" value="ACA86759.1"/>
    <property type="molecule type" value="Genomic_DNA"/>
</dbReference>
<dbReference type="RefSeq" id="WP_012325101.1">
    <property type="nucleotide sequence ID" value="NC_010506.1"/>
</dbReference>
<dbReference type="SMR" id="B1KG52"/>
<dbReference type="STRING" id="392500.Swoo_2482"/>
<dbReference type="KEGG" id="swd:Swoo_2482"/>
<dbReference type="eggNOG" id="COG2834">
    <property type="taxonomic scope" value="Bacteria"/>
</dbReference>
<dbReference type="HOGENOM" id="CLU_087560_0_0_6"/>
<dbReference type="Proteomes" id="UP000002168">
    <property type="component" value="Chromosome"/>
</dbReference>
<dbReference type="GO" id="GO:0030288">
    <property type="term" value="C:outer membrane-bounded periplasmic space"/>
    <property type="evidence" value="ECO:0007669"/>
    <property type="project" value="TreeGrafter"/>
</dbReference>
<dbReference type="GO" id="GO:0044874">
    <property type="term" value="P:lipoprotein localization to outer membrane"/>
    <property type="evidence" value="ECO:0007669"/>
    <property type="project" value="UniProtKB-UniRule"/>
</dbReference>
<dbReference type="GO" id="GO:0042953">
    <property type="term" value="P:lipoprotein transport"/>
    <property type="evidence" value="ECO:0007669"/>
    <property type="project" value="InterPro"/>
</dbReference>
<dbReference type="CDD" id="cd16325">
    <property type="entry name" value="LolA"/>
    <property type="match status" value="1"/>
</dbReference>
<dbReference type="Gene3D" id="2.50.20.10">
    <property type="entry name" value="Lipoprotein localisation LolA/LolB/LppX"/>
    <property type="match status" value="1"/>
</dbReference>
<dbReference type="HAMAP" id="MF_00240">
    <property type="entry name" value="LolA"/>
    <property type="match status" value="1"/>
</dbReference>
<dbReference type="InterPro" id="IPR029046">
    <property type="entry name" value="LolA/LolB/LppX"/>
</dbReference>
<dbReference type="InterPro" id="IPR004564">
    <property type="entry name" value="OM_lipoprot_carrier_LolA-like"/>
</dbReference>
<dbReference type="InterPro" id="IPR018323">
    <property type="entry name" value="OM_lipoprot_carrier_LolA_Pbac"/>
</dbReference>
<dbReference type="NCBIfam" id="TIGR00547">
    <property type="entry name" value="lolA"/>
    <property type="match status" value="1"/>
</dbReference>
<dbReference type="PANTHER" id="PTHR35869">
    <property type="entry name" value="OUTER-MEMBRANE LIPOPROTEIN CARRIER PROTEIN"/>
    <property type="match status" value="1"/>
</dbReference>
<dbReference type="PANTHER" id="PTHR35869:SF1">
    <property type="entry name" value="OUTER-MEMBRANE LIPOPROTEIN CARRIER PROTEIN"/>
    <property type="match status" value="1"/>
</dbReference>
<dbReference type="Pfam" id="PF03548">
    <property type="entry name" value="LolA"/>
    <property type="match status" value="1"/>
</dbReference>
<dbReference type="SUPFAM" id="SSF89392">
    <property type="entry name" value="Prokaryotic lipoproteins and lipoprotein localization factors"/>
    <property type="match status" value="1"/>
</dbReference>
<name>LOLA_SHEWM</name>
<gene>
    <name evidence="1" type="primary">lolA</name>
    <name type="ordered locus">Swoo_2482</name>
</gene>
<sequence>MRKTLTALMLSLPLLTPHMAFADESSVLKAKLTEIATLKAKFEQTVTDINNKQIQKGSGIFALAYPNQFYWHLTAPDESLIVADGTDVWIYNPFAEEVSVMDLNQAISASPIALLVHRDEETWSQYSVTSDNGCFNIKPKSIDAGVESVKVCFDDKTLTEMVLQDQQGNVSQFTLSEQTAIDDAERAMFKFTVPDDVDIDDQRLNAIN</sequence>
<proteinExistence type="inferred from homology"/>
<accession>B1KG52</accession>
<keyword id="KW-0143">Chaperone</keyword>
<keyword id="KW-0574">Periplasm</keyword>
<keyword id="KW-0653">Protein transport</keyword>
<keyword id="KW-1185">Reference proteome</keyword>
<keyword id="KW-0732">Signal</keyword>
<keyword id="KW-0813">Transport</keyword>
<reference key="1">
    <citation type="submission" date="2008-02" db="EMBL/GenBank/DDBJ databases">
        <title>Complete sequence of Shewanella woodyi ATCC 51908.</title>
        <authorList>
            <consortium name="US DOE Joint Genome Institute"/>
            <person name="Copeland A."/>
            <person name="Lucas S."/>
            <person name="Lapidus A."/>
            <person name="Glavina del Rio T."/>
            <person name="Dalin E."/>
            <person name="Tice H."/>
            <person name="Bruce D."/>
            <person name="Goodwin L."/>
            <person name="Pitluck S."/>
            <person name="Sims D."/>
            <person name="Brettin T."/>
            <person name="Detter J.C."/>
            <person name="Han C."/>
            <person name="Kuske C.R."/>
            <person name="Schmutz J."/>
            <person name="Larimer F."/>
            <person name="Land M."/>
            <person name="Hauser L."/>
            <person name="Kyrpides N."/>
            <person name="Lykidis A."/>
            <person name="Zhao J.-S."/>
            <person name="Richardson P."/>
        </authorList>
    </citation>
    <scope>NUCLEOTIDE SEQUENCE [LARGE SCALE GENOMIC DNA]</scope>
    <source>
        <strain>ATCC 51908 / MS32</strain>
    </source>
</reference>
<protein>
    <recommendedName>
        <fullName evidence="1">Outer-membrane lipoprotein carrier protein</fullName>
    </recommendedName>
</protein>
<evidence type="ECO:0000255" key="1">
    <source>
        <dbReference type="HAMAP-Rule" id="MF_00240"/>
    </source>
</evidence>
<comment type="function">
    <text evidence="1">Participates in the translocation of lipoproteins from the inner membrane to the outer membrane. Only forms a complex with a lipoprotein if the residue after the N-terminal Cys is not an aspartate (The Asp acts as a targeting signal to indicate that the lipoprotein should stay in the inner membrane).</text>
</comment>
<comment type="subunit">
    <text evidence="1">Monomer.</text>
</comment>
<comment type="subcellular location">
    <subcellularLocation>
        <location evidence="1">Periplasm</location>
    </subcellularLocation>
</comment>
<comment type="similarity">
    <text evidence="1">Belongs to the LolA family.</text>
</comment>